<feature type="chain" id="PRO_0000426885" description="ATP synthase subunit alpha">
    <location>
        <begin position="1"/>
        <end position="549"/>
    </location>
</feature>
<feature type="binding site" evidence="1">
    <location>
        <begin position="172"/>
        <end position="179"/>
    </location>
    <ligand>
        <name>ATP</name>
        <dbReference type="ChEBI" id="CHEBI:30616"/>
    </ligand>
</feature>
<feature type="site" description="Required for activity" evidence="1">
    <location>
        <position position="373"/>
    </location>
</feature>
<evidence type="ECO:0000255" key="1">
    <source>
        <dbReference type="HAMAP-Rule" id="MF_01346"/>
    </source>
</evidence>
<gene>
    <name evidence="1" type="primary">atpA</name>
    <name type="ordered locus">MT1348</name>
</gene>
<dbReference type="EC" id="7.1.2.2" evidence="1"/>
<dbReference type="EMBL" id="AE000516">
    <property type="protein sequence ID" value="AAK45610.1"/>
    <property type="molecule type" value="Genomic_DNA"/>
</dbReference>
<dbReference type="PIR" id="H70774">
    <property type="entry name" value="H70774"/>
</dbReference>
<dbReference type="RefSeq" id="WP_003406699.1">
    <property type="nucleotide sequence ID" value="NZ_KK341227.1"/>
</dbReference>
<dbReference type="SMR" id="P9WPU6"/>
<dbReference type="KEGG" id="mtc:MT1348"/>
<dbReference type="PATRIC" id="fig|83331.31.peg.1454"/>
<dbReference type="HOGENOM" id="CLU_010091_2_1_11"/>
<dbReference type="Proteomes" id="UP000001020">
    <property type="component" value="Chromosome"/>
</dbReference>
<dbReference type="GO" id="GO:0005886">
    <property type="term" value="C:plasma membrane"/>
    <property type="evidence" value="ECO:0007669"/>
    <property type="project" value="UniProtKB-SubCell"/>
</dbReference>
<dbReference type="GO" id="GO:0045259">
    <property type="term" value="C:proton-transporting ATP synthase complex"/>
    <property type="evidence" value="ECO:0007669"/>
    <property type="project" value="UniProtKB-KW"/>
</dbReference>
<dbReference type="GO" id="GO:0043531">
    <property type="term" value="F:ADP binding"/>
    <property type="evidence" value="ECO:0007669"/>
    <property type="project" value="TreeGrafter"/>
</dbReference>
<dbReference type="GO" id="GO:0005524">
    <property type="term" value="F:ATP binding"/>
    <property type="evidence" value="ECO:0007669"/>
    <property type="project" value="UniProtKB-UniRule"/>
</dbReference>
<dbReference type="GO" id="GO:0046933">
    <property type="term" value="F:proton-transporting ATP synthase activity, rotational mechanism"/>
    <property type="evidence" value="ECO:0007669"/>
    <property type="project" value="UniProtKB-UniRule"/>
</dbReference>
<dbReference type="CDD" id="cd18113">
    <property type="entry name" value="ATP-synt_F1_alpha_C"/>
    <property type="match status" value="1"/>
</dbReference>
<dbReference type="CDD" id="cd18116">
    <property type="entry name" value="ATP-synt_F1_alpha_N"/>
    <property type="match status" value="1"/>
</dbReference>
<dbReference type="CDD" id="cd01132">
    <property type="entry name" value="F1-ATPase_alpha_CD"/>
    <property type="match status" value="1"/>
</dbReference>
<dbReference type="FunFam" id="1.20.150.20:FF:000001">
    <property type="entry name" value="ATP synthase subunit alpha"/>
    <property type="match status" value="1"/>
</dbReference>
<dbReference type="FunFam" id="2.40.30.20:FF:000001">
    <property type="entry name" value="ATP synthase subunit alpha"/>
    <property type="match status" value="1"/>
</dbReference>
<dbReference type="FunFam" id="3.40.50.300:FF:000002">
    <property type="entry name" value="ATP synthase subunit alpha"/>
    <property type="match status" value="1"/>
</dbReference>
<dbReference type="Gene3D" id="2.40.30.20">
    <property type="match status" value="1"/>
</dbReference>
<dbReference type="Gene3D" id="1.20.150.20">
    <property type="entry name" value="ATP synthase alpha/beta chain, C-terminal domain"/>
    <property type="match status" value="1"/>
</dbReference>
<dbReference type="Gene3D" id="3.40.50.300">
    <property type="entry name" value="P-loop containing nucleotide triphosphate hydrolases"/>
    <property type="match status" value="1"/>
</dbReference>
<dbReference type="HAMAP" id="MF_01346">
    <property type="entry name" value="ATP_synth_alpha_bact"/>
    <property type="match status" value="1"/>
</dbReference>
<dbReference type="InterPro" id="IPR023366">
    <property type="entry name" value="ATP_synth_asu-like_sf"/>
</dbReference>
<dbReference type="InterPro" id="IPR000793">
    <property type="entry name" value="ATP_synth_asu_C"/>
</dbReference>
<dbReference type="InterPro" id="IPR038376">
    <property type="entry name" value="ATP_synth_asu_C_sf"/>
</dbReference>
<dbReference type="InterPro" id="IPR033732">
    <property type="entry name" value="ATP_synth_F1_a_nt-bd_dom"/>
</dbReference>
<dbReference type="InterPro" id="IPR005294">
    <property type="entry name" value="ATP_synth_F1_asu"/>
</dbReference>
<dbReference type="InterPro" id="IPR020003">
    <property type="entry name" value="ATPase_a/bsu_AS"/>
</dbReference>
<dbReference type="InterPro" id="IPR004100">
    <property type="entry name" value="ATPase_F1/V1/A1_a/bsu_N"/>
</dbReference>
<dbReference type="InterPro" id="IPR036121">
    <property type="entry name" value="ATPase_F1/V1/A1_a/bsu_N_sf"/>
</dbReference>
<dbReference type="InterPro" id="IPR000194">
    <property type="entry name" value="ATPase_F1/V1/A1_a/bsu_nucl-bd"/>
</dbReference>
<dbReference type="InterPro" id="IPR027417">
    <property type="entry name" value="P-loop_NTPase"/>
</dbReference>
<dbReference type="NCBIfam" id="TIGR00962">
    <property type="entry name" value="atpA"/>
    <property type="match status" value="1"/>
</dbReference>
<dbReference type="NCBIfam" id="NF009884">
    <property type="entry name" value="PRK13343.1"/>
    <property type="match status" value="1"/>
</dbReference>
<dbReference type="PANTHER" id="PTHR48082">
    <property type="entry name" value="ATP SYNTHASE SUBUNIT ALPHA, MITOCHONDRIAL"/>
    <property type="match status" value="1"/>
</dbReference>
<dbReference type="PANTHER" id="PTHR48082:SF2">
    <property type="entry name" value="ATP SYNTHASE SUBUNIT ALPHA, MITOCHONDRIAL"/>
    <property type="match status" value="1"/>
</dbReference>
<dbReference type="Pfam" id="PF00006">
    <property type="entry name" value="ATP-synt_ab"/>
    <property type="match status" value="1"/>
</dbReference>
<dbReference type="Pfam" id="PF00306">
    <property type="entry name" value="ATP-synt_ab_C"/>
    <property type="match status" value="1"/>
</dbReference>
<dbReference type="Pfam" id="PF02874">
    <property type="entry name" value="ATP-synt_ab_N"/>
    <property type="match status" value="1"/>
</dbReference>
<dbReference type="PIRSF" id="PIRSF039088">
    <property type="entry name" value="F_ATPase_subunit_alpha"/>
    <property type="match status" value="1"/>
</dbReference>
<dbReference type="SUPFAM" id="SSF47917">
    <property type="entry name" value="C-terminal domain of alpha and beta subunits of F1 ATP synthase"/>
    <property type="match status" value="1"/>
</dbReference>
<dbReference type="SUPFAM" id="SSF50615">
    <property type="entry name" value="N-terminal domain of alpha and beta subunits of F1 ATP synthase"/>
    <property type="match status" value="1"/>
</dbReference>
<dbReference type="SUPFAM" id="SSF52540">
    <property type="entry name" value="P-loop containing nucleoside triphosphate hydrolases"/>
    <property type="match status" value="1"/>
</dbReference>
<dbReference type="PROSITE" id="PS00152">
    <property type="entry name" value="ATPASE_ALPHA_BETA"/>
    <property type="match status" value="1"/>
</dbReference>
<proteinExistence type="inferred from homology"/>
<accession>P9WPU6</accession>
<accession>L0T7W3</accession>
<accession>P63673</accession>
<accession>Q10592</accession>
<keyword id="KW-0066">ATP synthesis</keyword>
<keyword id="KW-0067">ATP-binding</keyword>
<keyword id="KW-1003">Cell membrane</keyword>
<keyword id="KW-0139">CF(1)</keyword>
<keyword id="KW-0375">Hydrogen ion transport</keyword>
<keyword id="KW-0406">Ion transport</keyword>
<keyword id="KW-0472">Membrane</keyword>
<keyword id="KW-0547">Nucleotide-binding</keyword>
<keyword id="KW-1185">Reference proteome</keyword>
<keyword id="KW-1278">Translocase</keyword>
<keyword id="KW-0813">Transport</keyword>
<comment type="function">
    <text evidence="1">Produces ATP from ADP in the presence of a proton gradient across the membrane. The alpha chain is a regulatory subunit.</text>
</comment>
<comment type="catalytic activity">
    <reaction evidence="1">
        <text>ATP + H2O + 4 H(+)(in) = ADP + phosphate + 5 H(+)(out)</text>
        <dbReference type="Rhea" id="RHEA:57720"/>
        <dbReference type="ChEBI" id="CHEBI:15377"/>
        <dbReference type="ChEBI" id="CHEBI:15378"/>
        <dbReference type="ChEBI" id="CHEBI:30616"/>
        <dbReference type="ChEBI" id="CHEBI:43474"/>
        <dbReference type="ChEBI" id="CHEBI:456216"/>
        <dbReference type="EC" id="7.1.2.2"/>
    </reaction>
</comment>
<comment type="subunit">
    <text evidence="1">F-type ATPases have 2 components, CF(1) - the catalytic core - and CF(0) - the membrane proton channel. CF(1) has five subunits: alpha(3), beta(3), gamma(1), delta(1), epsilon(1). CF(0) has three main subunits: a(1), b(2) and c(9-12). The alpha and beta chains form an alternating ring which encloses part of the gamma chain. CF(1) is attached to CF(0) by a central stalk formed by the gamma and epsilon chains, while a peripheral stalk is formed by the delta and b chains.</text>
</comment>
<comment type="subcellular location">
    <subcellularLocation>
        <location evidence="1">Cell membrane</location>
        <topology evidence="1">Peripheral membrane protein</topology>
    </subcellularLocation>
</comment>
<comment type="similarity">
    <text evidence="1">Belongs to the ATPase alpha/beta chains family.</text>
</comment>
<protein>
    <recommendedName>
        <fullName evidence="1">ATP synthase subunit alpha</fullName>
        <ecNumber evidence="1">7.1.2.2</ecNumber>
    </recommendedName>
    <alternativeName>
        <fullName evidence="1">ATP synthase F1 sector subunit alpha</fullName>
    </alternativeName>
    <alternativeName>
        <fullName evidence="1">F-ATPase subunit alpha</fullName>
    </alternativeName>
</protein>
<sequence>MAELTIPADDIQSAIEEYVSSFTADTSREEVGTVVDAGDGIAHVEGLPSVMTQELLEFPGGILGVALNLDEHSVGAVILGDFENIEEGQQVKRTGEVLSVPVGDGFLGRVVNPLGQPIDGRGDVDSDTRRALELQAPSVVHRQGVKEPLQTGIKAIDAMTPIGRGQRQLIIGDRKTGKTAVCVDTILNQRQNWESGDPKKQVRCVYVAIGQKGTTIAAVRRTLEEGGAMDYTTIVAAAASESAGFKWLAPYTGSAIAQHWMYEGKHVLIIFDDLTKQAEAYRAISLLLRRPPGREAYPGDVFYLHSRLLERCAKLSDDLGGGSLTGLPIIETKANDISAYIPTNVISITDGQCFLETDLFNQGVRPAINVGVSVSRVGGAAQIKAMKEVAGSLRLDLSQYRELEAFAAFASDLDAASKAQLERGARLVELLKQPQSQPMPVEEQVVSIFLGTGGHLDSVPVEDVRRFETELLDHMRASEEEILTEIRDSQKLTEEAADKLTEVIKNFKKGFAATGGGSVVPDEHVEALDEDKLAKEAVKVKKPAPKKKK</sequence>
<organism>
    <name type="scientific">Mycobacterium tuberculosis (strain CDC 1551 / Oshkosh)</name>
    <dbReference type="NCBI Taxonomy" id="83331"/>
    <lineage>
        <taxon>Bacteria</taxon>
        <taxon>Bacillati</taxon>
        <taxon>Actinomycetota</taxon>
        <taxon>Actinomycetes</taxon>
        <taxon>Mycobacteriales</taxon>
        <taxon>Mycobacteriaceae</taxon>
        <taxon>Mycobacterium</taxon>
        <taxon>Mycobacterium tuberculosis complex</taxon>
    </lineage>
</organism>
<name>ATPA_MYCTO</name>
<reference key="1">
    <citation type="journal article" date="2002" name="J. Bacteriol.">
        <title>Whole-genome comparison of Mycobacterium tuberculosis clinical and laboratory strains.</title>
        <authorList>
            <person name="Fleischmann R.D."/>
            <person name="Alland D."/>
            <person name="Eisen J.A."/>
            <person name="Carpenter L."/>
            <person name="White O."/>
            <person name="Peterson J.D."/>
            <person name="DeBoy R.T."/>
            <person name="Dodson R.J."/>
            <person name="Gwinn M.L."/>
            <person name="Haft D.H."/>
            <person name="Hickey E.K."/>
            <person name="Kolonay J.F."/>
            <person name="Nelson W.C."/>
            <person name="Umayam L.A."/>
            <person name="Ermolaeva M.D."/>
            <person name="Salzberg S.L."/>
            <person name="Delcher A."/>
            <person name="Utterback T.R."/>
            <person name="Weidman J.F."/>
            <person name="Khouri H.M."/>
            <person name="Gill J."/>
            <person name="Mikula A."/>
            <person name="Bishai W."/>
            <person name="Jacobs W.R. Jr."/>
            <person name="Venter J.C."/>
            <person name="Fraser C.M."/>
        </authorList>
    </citation>
    <scope>NUCLEOTIDE SEQUENCE [LARGE SCALE GENOMIC DNA]</scope>
    <source>
        <strain>CDC 1551 / Oshkosh</strain>
    </source>
</reference>